<feature type="chain" id="PRO_0000152447" description="Imidazole glycerol phosphate synthase subunit HisH">
    <location>
        <begin position="1"/>
        <end position="205"/>
    </location>
</feature>
<feature type="domain" description="Glutamine amidotransferase type-1" evidence="1">
    <location>
        <begin position="1"/>
        <end position="205"/>
    </location>
</feature>
<feature type="active site" description="Nucleophile" evidence="1">
    <location>
        <position position="79"/>
    </location>
</feature>
<feature type="active site" evidence="1">
    <location>
        <position position="186"/>
    </location>
</feature>
<feature type="active site" evidence="1">
    <location>
        <position position="188"/>
    </location>
</feature>
<comment type="function">
    <text evidence="1">IGPS catalyzes the conversion of PRFAR and glutamine to IGP, AICAR and glutamate. The HisH subunit catalyzes the hydrolysis of glutamine to glutamate and ammonia as part of the synthesis of IGP and AICAR. The resulting ammonia molecule is channeled to the active site of HisF.</text>
</comment>
<comment type="catalytic activity">
    <reaction evidence="1">
        <text>5-[(5-phospho-1-deoxy-D-ribulos-1-ylimino)methylamino]-1-(5-phospho-beta-D-ribosyl)imidazole-4-carboxamide + L-glutamine = D-erythro-1-(imidazol-4-yl)glycerol 3-phosphate + 5-amino-1-(5-phospho-beta-D-ribosyl)imidazole-4-carboxamide + L-glutamate + H(+)</text>
        <dbReference type="Rhea" id="RHEA:24793"/>
        <dbReference type="ChEBI" id="CHEBI:15378"/>
        <dbReference type="ChEBI" id="CHEBI:29985"/>
        <dbReference type="ChEBI" id="CHEBI:58278"/>
        <dbReference type="ChEBI" id="CHEBI:58359"/>
        <dbReference type="ChEBI" id="CHEBI:58475"/>
        <dbReference type="ChEBI" id="CHEBI:58525"/>
        <dbReference type="EC" id="4.3.2.10"/>
    </reaction>
</comment>
<comment type="catalytic activity">
    <reaction evidence="1">
        <text>L-glutamine + H2O = L-glutamate + NH4(+)</text>
        <dbReference type="Rhea" id="RHEA:15889"/>
        <dbReference type="ChEBI" id="CHEBI:15377"/>
        <dbReference type="ChEBI" id="CHEBI:28938"/>
        <dbReference type="ChEBI" id="CHEBI:29985"/>
        <dbReference type="ChEBI" id="CHEBI:58359"/>
        <dbReference type="EC" id="3.5.1.2"/>
    </reaction>
</comment>
<comment type="pathway">
    <text evidence="1">Amino-acid biosynthesis; L-histidine biosynthesis; L-histidine from 5-phospho-alpha-D-ribose 1-diphosphate: step 5/9.</text>
</comment>
<comment type="subunit">
    <text evidence="1">Heterodimer of HisH and HisF.</text>
</comment>
<comment type="subcellular location">
    <subcellularLocation>
        <location evidence="1">Cytoplasm</location>
    </subcellularLocation>
</comment>
<name>HIS5_WOLSU</name>
<dbReference type="EC" id="4.3.2.10" evidence="1"/>
<dbReference type="EC" id="3.5.1.2" evidence="1"/>
<dbReference type="EMBL" id="BX571658">
    <property type="protein sequence ID" value="CAE09748.1"/>
    <property type="molecule type" value="Genomic_DNA"/>
</dbReference>
<dbReference type="RefSeq" id="WP_011138548.1">
    <property type="nucleotide sequence ID" value="NC_005090.1"/>
</dbReference>
<dbReference type="SMR" id="Q7M9X0"/>
<dbReference type="STRING" id="273121.WS0617"/>
<dbReference type="KEGG" id="wsu:WS0617"/>
<dbReference type="eggNOG" id="COG0118">
    <property type="taxonomic scope" value="Bacteria"/>
</dbReference>
<dbReference type="HOGENOM" id="CLU_071837_2_2_7"/>
<dbReference type="UniPathway" id="UPA00031">
    <property type="reaction ID" value="UER00010"/>
</dbReference>
<dbReference type="Proteomes" id="UP000000422">
    <property type="component" value="Chromosome"/>
</dbReference>
<dbReference type="GO" id="GO:0005737">
    <property type="term" value="C:cytoplasm"/>
    <property type="evidence" value="ECO:0007669"/>
    <property type="project" value="UniProtKB-SubCell"/>
</dbReference>
<dbReference type="GO" id="GO:0004359">
    <property type="term" value="F:glutaminase activity"/>
    <property type="evidence" value="ECO:0007669"/>
    <property type="project" value="UniProtKB-EC"/>
</dbReference>
<dbReference type="GO" id="GO:0000107">
    <property type="term" value="F:imidazoleglycerol-phosphate synthase activity"/>
    <property type="evidence" value="ECO:0007669"/>
    <property type="project" value="UniProtKB-UniRule"/>
</dbReference>
<dbReference type="GO" id="GO:0016829">
    <property type="term" value="F:lyase activity"/>
    <property type="evidence" value="ECO:0007669"/>
    <property type="project" value="UniProtKB-KW"/>
</dbReference>
<dbReference type="GO" id="GO:0000105">
    <property type="term" value="P:L-histidine biosynthetic process"/>
    <property type="evidence" value="ECO:0007669"/>
    <property type="project" value="UniProtKB-UniRule"/>
</dbReference>
<dbReference type="CDD" id="cd01748">
    <property type="entry name" value="GATase1_IGP_Synthase"/>
    <property type="match status" value="1"/>
</dbReference>
<dbReference type="Gene3D" id="3.40.50.880">
    <property type="match status" value="1"/>
</dbReference>
<dbReference type="HAMAP" id="MF_00278">
    <property type="entry name" value="HisH"/>
    <property type="match status" value="1"/>
</dbReference>
<dbReference type="InterPro" id="IPR029062">
    <property type="entry name" value="Class_I_gatase-like"/>
</dbReference>
<dbReference type="InterPro" id="IPR017926">
    <property type="entry name" value="GATASE"/>
</dbReference>
<dbReference type="InterPro" id="IPR010139">
    <property type="entry name" value="Imidazole-glycPsynth_HisH"/>
</dbReference>
<dbReference type="NCBIfam" id="TIGR01855">
    <property type="entry name" value="IMP_synth_hisH"/>
    <property type="match status" value="1"/>
</dbReference>
<dbReference type="PANTHER" id="PTHR42701">
    <property type="entry name" value="IMIDAZOLE GLYCEROL PHOSPHATE SYNTHASE SUBUNIT HISH"/>
    <property type="match status" value="1"/>
</dbReference>
<dbReference type="PANTHER" id="PTHR42701:SF1">
    <property type="entry name" value="IMIDAZOLE GLYCEROL PHOSPHATE SYNTHASE SUBUNIT HISH"/>
    <property type="match status" value="1"/>
</dbReference>
<dbReference type="Pfam" id="PF00117">
    <property type="entry name" value="GATase"/>
    <property type="match status" value="1"/>
</dbReference>
<dbReference type="PIRSF" id="PIRSF000495">
    <property type="entry name" value="Amidotransf_hisH"/>
    <property type="match status" value="1"/>
</dbReference>
<dbReference type="SUPFAM" id="SSF52317">
    <property type="entry name" value="Class I glutamine amidotransferase-like"/>
    <property type="match status" value="1"/>
</dbReference>
<dbReference type="PROSITE" id="PS51273">
    <property type="entry name" value="GATASE_TYPE_1"/>
    <property type="match status" value="1"/>
</dbReference>
<sequence>MVGIVNYNIGNLASVLNALVKVGAKAQIEKEPSRLLEYDRLILPGVGAFGDAMEHLVQSGMKEAVLEFAKSGKPLLGICLGMQLLFEKSYEFGEHAGLGLLEGEIIPFDKTRMGEGYKIPQMGWNRFYAKKKSPLLKGLEEGFYLYYVHSFHAVAKREEDVLGESVYGYPFVSAIERDNVAGFQPHPEKSHDVGLRILKNFCEIG</sequence>
<evidence type="ECO:0000255" key="1">
    <source>
        <dbReference type="HAMAP-Rule" id="MF_00278"/>
    </source>
</evidence>
<reference key="1">
    <citation type="journal article" date="2003" name="Proc. Natl. Acad. Sci. U.S.A.">
        <title>Complete genome sequence and analysis of Wolinella succinogenes.</title>
        <authorList>
            <person name="Baar C."/>
            <person name="Eppinger M."/>
            <person name="Raddatz G."/>
            <person name="Simon J."/>
            <person name="Lanz C."/>
            <person name="Klimmek O."/>
            <person name="Nandakumar R."/>
            <person name="Gross R."/>
            <person name="Rosinus A."/>
            <person name="Keller H."/>
            <person name="Jagtap P."/>
            <person name="Linke B."/>
            <person name="Meyer F."/>
            <person name="Lederer H."/>
            <person name="Schuster S.C."/>
        </authorList>
    </citation>
    <scope>NUCLEOTIDE SEQUENCE [LARGE SCALE GENOMIC DNA]</scope>
    <source>
        <strain>ATCC 29543 / DSM 1740 / CCUG 13145 / JCM 31913 / LMG 7466 / NCTC 11488 / FDC 602W</strain>
    </source>
</reference>
<accession>Q7M9X0</accession>
<organism>
    <name type="scientific">Wolinella succinogenes (strain ATCC 29543 / DSM 1740 / CCUG 13145 / JCM 31913 / LMG 7466 / NCTC 11488 / FDC 602W)</name>
    <name type="common">Vibrio succinogenes</name>
    <dbReference type="NCBI Taxonomy" id="273121"/>
    <lineage>
        <taxon>Bacteria</taxon>
        <taxon>Pseudomonadati</taxon>
        <taxon>Campylobacterota</taxon>
        <taxon>Epsilonproteobacteria</taxon>
        <taxon>Campylobacterales</taxon>
        <taxon>Helicobacteraceae</taxon>
        <taxon>Wolinella</taxon>
    </lineage>
</organism>
<protein>
    <recommendedName>
        <fullName evidence="1">Imidazole glycerol phosphate synthase subunit HisH</fullName>
        <ecNumber evidence="1">4.3.2.10</ecNumber>
    </recommendedName>
    <alternativeName>
        <fullName evidence="1">IGP synthase glutaminase subunit</fullName>
        <ecNumber evidence="1">3.5.1.2</ecNumber>
    </alternativeName>
    <alternativeName>
        <fullName evidence="1">IGP synthase subunit HisH</fullName>
    </alternativeName>
    <alternativeName>
        <fullName evidence="1">ImGP synthase subunit HisH</fullName>
        <shortName evidence="1">IGPS subunit HisH</shortName>
    </alternativeName>
</protein>
<keyword id="KW-0028">Amino-acid biosynthesis</keyword>
<keyword id="KW-0963">Cytoplasm</keyword>
<keyword id="KW-0315">Glutamine amidotransferase</keyword>
<keyword id="KW-0368">Histidine biosynthesis</keyword>
<keyword id="KW-0378">Hydrolase</keyword>
<keyword id="KW-0456">Lyase</keyword>
<keyword id="KW-1185">Reference proteome</keyword>
<gene>
    <name evidence="1" type="primary">hisH</name>
    <name type="ordered locus">WS0617</name>
</gene>
<proteinExistence type="inferred from homology"/>